<feature type="chain" id="PRO_0000109237" description="UDP-N-acetylglucosamine--N-acetylmuramyl-(pentapeptide) pyrophosphoryl-undecaprenol N-acetylglucosamine transferase">
    <location>
        <begin position="1"/>
        <end position="355"/>
    </location>
</feature>
<feature type="binding site" evidence="1">
    <location>
        <begin position="14"/>
        <end position="16"/>
    </location>
    <ligand>
        <name>UDP-N-acetyl-alpha-D-glucosamine</name>
        <dbReference type="ChEBI" id="CHEBI:57705"/>
    </ligand>
</feature>
<feature type="binding site" evidence="1">
    <location>
        <position position="126"/>
    </location>
    <ligand>
        <name>UDP-N-acetyl-alpha-D-glucosamine</name>
        <dbReference type="ChEBI" id="CHEBI:57705"/>
    </ligand>
</feature>
<feature type="binding site" evidence="1">
    <location>
        <position position="162"/>
    </location>
    <ligand>
        <name>UDP-N-acetyl-alpha-D-glucosamine</name>
        <dbReference type="ChEBI" id="CHEBI:57705"/>
    </ligand>
</feature>
<feature type="binding site" evidence="1">
    <location>
        <position position="190"/>
    </location>
    <ligand>
        <name>UDP-N-acetyl-alpha-D-glucosamine</name>
        <dbReference type="ChEBI" id="CHEBI:57705"/>
    </ligand>
</feature>
<feature type="binding site" evidence="1">
    <location>
        <position position="243"/>
    </location>
    <ligand>
        <name>UDP-N-acetyl-alpha-D-glucosamine</name>
        <dbReference type="ChEBI" id="CHEBI:57705"/>
    </ligand>
</feature>
<feature type="binding site" evidence="1">
    <location>
        <begin position="262"/>
        <end position="267"/>
    </location>
    <ligand>
        <name>UDP-N-acetyl-alpha-D-glucosamine</name>
        <dbReference type="ChEBI" id="CHEBI:57705"/>
    </ligand>
</feature>
<feature type="binding site" evidence="1">
    <location>
        <position position="287"/>
    </location>
    <ligand>
        <name>UDP-N-acetyl-alpha-D-glucosamine</name>
        <dbReference type="ChEBI" id="CHEBI:57705"/>
    </ligand>
</feature>
<evidence type="ECO:0000255" key="1">
    <source>
        <dbReference type="HAMAP-Rule" id="MF_00033"/>
    </source>
</evidence>
<dbReference type="EC" id="2.4.1.227" evidence="1"/>
<dbReference type="EMBL" id="AE016795">
    <property type="protein sequence ID" value="AAO09094.2"/>
    <property type="molecule type" value="Genomic_DNA"/>
</dbReference>
<dbReference type="RefSeq" id="WP_011078663.1">
    <property type="nucleotide sequence ID" value="NC_004459.3"/>
</dbReference>
<dbReference type="SMR" id="Q8DEL0"/>
<dbReference type="CAZy" id="GT28">
    <property type="family name" value="Glycosyltransferase Family 28"/>
</dbReference>
<dbReference type="KEGG" id="vvu:VV1_0578"/>
<dbReference type="HOGENOM" id="CLU_037404_2_0_6"/>
<dbReference type="UniPathway" id="UPA00219"/>
<dbReference type="Proteomes" id="UP000002275">
    <property type="component" value="Chromosome 1"/>
</dbReference>
<dbReference type="GO" id="GO:0005886">
    <property type="term" value="C:plasma membrane"/>
    <property type="evidence" value="ECO:0007669"/>
    <property type="project" value="UniProtKB-SubCell"/>
</dbReference>
<dbReference type="GO" id="GO:0051991">
    <property type="term" value="F:UDP-N-acetyl-D-glucosamine:N-acetylmuramoyl-L-alanyl-D-glutamyl-meso-2,6-diaminopimelyl-D-alanyl-D-alanine-diphosphoundecaprenol 4-beta-N-acetylglucosaminlytransferase activity"/>
    <property type="evidence" value="ECO:0007669"/>
    <property type="project" value="RHEA"/>
</dbReference>
<dbReference type="GO" id="GO:0050511">
    <property type="term" value="F:undecaprenyldiphospho-muramoylpentapeptide beta-N-acetylglucosaminyltransferase activity"/>
    <property type="evidence" value="ECO:0007669"/>
    <property type="project" value="UniProtKB-UniRule"/>
</dbReference>
<dbReference type="GO" id="GO:0005975">
    <property type="term" value="P:carbohydrate metabolic process"/>
    <property type="evidence" value="ECO:0007669"/>
    <property type="project" value="InterPro"/>
</dbReference>
<dbReference type="GO" id="GO:0051301">
    <property type="term" value="P:cell division"/>
    <property type="evidence" value="ECO:0007669"/>
    <property type="project" value="UniProtKB-KW"/>
</dbReference>
<dbReference type="GO" id="GO:0071555">
    <property type="term" value="P:cell wall organization"/>
    <property type="evidence" value="ECO:0007669"/>
    <property type="project" value="UniProtKB-KW"/>
</dbReference>
<dbReference type="GO" id="GO:0030259">
    <property type="term" value="P:lipid glycosylation"/>
    <property type="evidence" value="ECO:0007669"/>
    <property type="project" value="UniProtKB-UniRule"/>
</dbReference>
<dbReference type="GO" id="GO:0009252">
    <property type="term" value="P:peptidoglycan biosynthetic process"/>
    <property type="evidence" value="ECO:0007669"/>
    <property type="project" value="UniProtKB-UniRule"/>
</dbReference>
<dbReference type="GO" id="GO:0008360">
    <property type="term" value="P:regulation of cell shape"/>
    <property type="evidence" value="ECO:0007669"/>
    <property type="project" value="UniProtKB-KW"/>
</dbReference>
<dbReference type="CDD" id="cd03785">
    <property type="entry name" value="GT28_MurG"/>
    <property type="match status" value="1"/>
</dbReference>
<dbReference type="Gene3D" id="3.40.50.2000">
    <property type="entry name" value="Glycogen Phosphorylase B"/>
    <property type="match status" value="2"/>
</dbReference>
<dbReference type="HAMAP" id="MF_00033">
    <property type="entry name" value="MurG"/>
    <property type="match status" value="1"/>
</dbReference>
<dbReference type="InterPro" id="IPR006009">
    <property type="entry name" value="GlcNAc_MurG"/>
</dbReference>
<dbReference type="InterPro" id="IPR007235">
    <property type="entry name" value="Glyco_trans_28_C"/>
</dbReference>
<dbReference type="InterPro" id="IPR004276">
    <property type="entry name" value="GlycoTrans_28_N"/>
</dbReference>
<dbReference type="NCBIfam" id="TIGR01133">
    <property type="entry name" value="murG"/>
    <property type="match status" value="1"/>
</dbReference>
<dbReference type="PANTHER" id="PTHR21015:SF22">
    <property type="entry name" value="GLYCOSYLTRANSFERASE"/>
    <property type="match status" value="1"/>
</dbReference>
<dbReference type="PANTHER" id="PTHR21015">
    <property type="entry name" value="UDP-N-ACETYLGLUCOSAMINE--N-ACETYLMURAMYL-(PENTAPEPTIDE) PYROPHOSPHORYL-UNDECAPRENOL N-ACETYLGLUCOSAMINE TRANSFERASE 1"/>
    <property type="match status" value="1"/>
</dbReference>
<dbReference type="Pfam" id="PF04101">
    <property type="entry name" value="Glyco_tran_28_C"/>
    <property type="match status" value="1"/>
</dbReference>
<dbReference type="Pfam" id="PF03033">
    <property type="entry name" value="Glyco_transf_28"/>
    <property type="match status" value="1"/>
</dbReference>
<dbReference type="SUPFAM" id="SSF53756">
    <property type="entry name" value="UDP-Glycosyltransferase/glycogen phosphorylase"/>
    <property type="match status" value="1"/>
</dbReference>
<reference key="1">
    <citation type="submission" date="2002-12" db="EMBL/GenBank/DDBJ databases">
        <title>Complete genome sequence of Vibrio vulnificus CMCP6.</title>
        <authorList>
            <person name="Rhee J.H."/>
            <person name="Kim S.Y."/>
            <person name="Chung S.S."/>
            <person name="Kim J.J."/>
            <person name="Moon Y.H."/>
            <person name="Jeong H."/>
            <person name="Choy H.E."/>
        </authorList>
    </citation>
    <scope>NUCLEOTIDE SEQUENCE [LARGE SCALE GENOMIC DNA]</scope>
    <source>
        <strain>CMCP6</strain>
    </source>
</reference>
<name>MURG_VIBVU</name>
<keyword id="KW-0131">Cell cycle</keyword>
<keyword id="KW-0132">Cell division</keyword>
<keyword id="KW-0997">Cell inner membrane</keyword>
<keyword id="KW-1003">Cell membrane</keyword>
<keyword id="KW-0133">Cell shape</keyword>
<keyword id="KW-0961">Cell wall biogenesis/degradation</keyword>
<keyword id="KW-0328">Glycosyltransferase</keyword>
<keyword id="KW-0472">Membrane</keyword>
<keyword id="KW-0573">Peptidoglycan synthesis</keyword>
<keyword id="KW-0808">Transferase</keyword>
<protein>
    <recommendedName>
        <fullName evidence="1">UDP-N-acetylglucosamine--N-acetylmuramyl-(pentapeptide) pyrophosphoryl-undecaprenol N-acetylglucosamine transferase</fullName>
        <ecNumber evidence="1">2.4.1.227</ecNumber>
    </recommendedName>
    <alternativeName>
        <fullName evidence="1">Undecaprenyl-PP-MurNAc-pentapeptide-UDPGlcNAc GlcNAc transferase</fullName>
    </alternativeName>
</protein>
<organism>
    <name type="scientific">Vibrio vulnificus (strain CMCP6)</name>
    <dbReference type="NCBI Taxonomy" id="216895"/>
    <lineage>
        <taxon>Bacteria</taxon>
        <taxon>Pseudomonadati</taxon>
        <taxon>Pseudomonadota</taxon>
        <taxon>Gammaproteobacteria</taxon>
        <taxon>Vibrionales</taxon>
        <taxon>Vibrionaceae</taxon>
        <taxon>Vibrio</taxon>
    </lineage>
</organism>
<proteinExistence type="inferred from homology"/>
<accession>Q8DEL0</accession>
<sequence length="355" mass="38156">MKKNKRLMVMAGGTGGHVFPGLAVAKKLQQQGWEIRWLGTADRMEAELVPKHGIDIDFIKVKGLRGQGIKRLVLAPFQILNAIFQAKAHIKRWQPDAVLGMGGYVSGPGGIAAWLSGIPVVLHEQNAVAGLTNHWLAKIAKKVFQAFPGAFKDAPVVGNPVREDVVALPDPMQRMQDREGAIRILVMGGSQGARILNQTMPQVMAQLGSGFEIRHQAGKGSADEVRLAYQQAGVEHVEVSEFIDDVAAQYAWADLLVCRSGALTVSEVSAAGVGAIFIPFMHKDRQQALNADHLVACGAALMIEQPQLTVDKLAGEIQKLGRDTLLSMALHARAAAQNNADQVVADAIVALTEQK</sequence>
<comment type="function">
    <text evidence="1">Cell wall formation. Catalyzes the transfer of a GlcNAc subunit on undecaprenyl-pyrophosphoryl-MurNAc-pentapeptide (lipid intermediate I) to form undecaprenyl-pyrophosphoryl-MurNAc-(pentapeptide)GlcNAc (lipid intermediate II).</text>
</comment>
<comment type="catalytic activity">
    <reaction evidence="1">
        <text>di-trans,octa-cis-undecaprenyl diphospho-N-acetyl-alpha-D-muramoyl-L-alanyl-D-glutamyl-meso-2,6-diaminopimeloyl-D-alanyl-D-alanine + UDP-N-acetyl-alpha-D-glucosamine = di-trans,octa-cis-undecaprenyl diphospho-[N-acetyl-alpha-D-glucosaminyl-(1-&gt;4)]-N-acetyl-alpha-D-muramoyl-L-alanyl-D-glutamyl-meso-2,6-diaminopimeloyl-D-alanyl-D-alanine + UDP + H(+)</text>
        <dbReference type="Rhea" id="RHEA:31227"/>
        <dbReference type="ChEBI" id="CHEBI:15378"/>
        <dbReference type="ChEBI" id="CHEBI:57705"/>
        <dbReference type="ChEBI" id="CHEBI:58223"/>
        <dbReference type="ChEBI" id="CHEBI:61387"/>
        <dbReference type="ChEBI" id="CHEBI:61388"/>
        <dbReference type="EC" id="2.4.1.227"/>
    </reaction>
</comment>
<comment type="pathway">
    <text evidence="1">Cell wall biogenesis; peptidoglycan biosynthesis.</text>
</comment>
<comment type="subcellular location">
    <subcellularLocation>
        <location evidence="1">Cell inner membrane</location>
        <topology evidence="1">Peripheral membrane protein</topology>
        <orientation evidence="1">Cytoplasmic side</orientation>
    </subcellularLocation>
</comment>
<comment type="similarity">
    <text evidence="1">Belongs to the glycosyltransferase 28 family. MurG subfamily.</text>
</comment>
<gene>
    <name evidence="1" type="primary">murG</name>
    <name type="ordered locus">VV1_0578</name>
</gene>